<accession>Q3IPJ1</accession>
<evidence type="ECO:0000255" key="1">
    <source>
        <dbReference type="HAMAP-Rule" id="MF_00289"/>
    </source>
</evidence>
<organism>
    <name type="scientific">Natronomonas pharaonis (strain ATCC 35678 / DSM 2160 / CIP 103997 / JCM 8858 / NBRC 14720 / NCIMB 2260 / Gabara)</name>
    <name type="common">Halobacterium pharaonis</name>
    <dbReference type="NCBI Taxonomy" id="348780"/>
    <lineage>
        <taxon>Archaea</taxon>
        <taxon>Methanobacteriati</taxon>
        <taxon>Methanobacteriota</taxon>
        <taxon>Stenosarchaea group</taxon>
        <taxon>Halobacteria</taxon>
        <taxon>Halobacteriales</taxon>
        <taxon>Haloarculaceae</taxon>
        <taxon>Natronomonas</taxon>
    </lineage>
</organism>
<proteinExistence type="inferred from homology"/>
<sequence length="255" mass="28002">MQGQSQQQAYDRGITIFSPDGRLYQVEYAREAVKRGTASIGIRTEDGVVLVVDKRIRSPLMERTSVEKIHKADDHIGIASAGHVADARQLIDFARRQAQVNQLRYDEPIGVETLTKAVTDHIQQYTQVGGARPFGVALIIGGIEDGEPRLYETDPSGTPYEWQALAVGADRGDIQEYLEEHYSESLDTEAGIGLALEALASVNDDSLTPEGIGLATVTVDDDDGFSQLSDEEIEAHLEERDLLEAEDDADEDDEE</sequence>
<gene>
    <name evidence="1" type="primary">psmA</name>
    <name type="ordered locus">NP_3738A</name>
</gene>
<reference key="1">
    <citation type="journal article" date="2005" name="Genome Res.">
        <title>Living with two extremes: conclusions from the genome sequence of Natronomonas pharaonis.</title>
        <authorList>
            <person name="Falb M."/>
            <person name="Pfeiffer F."/>
            <person name="Palm P."/>
            <person name="Rodewald K."/>
            <person name="Hickmann V."/>
            <person name="Tittor J."/>
            <person name="Oesterhelt D."/>
        </authorList>
    </citation>
    <scope>NUCLEOTIDE SEQUENCE [LARGE SCALE GENOMIC DNA]</scope>
    <source>
        <strain>ATCC 35678 / DSM 2160 / CIP 103997 / JCM 8858 / NBRC 14720 / NCIMB 2260 / Gabara</strain>
    </source>
</reference>
<protein>
    <recommendedName>
        <fullName evidence="1">Proteasome subunit alpha</fullName>
    </recommendedName>
    <alternativeName>
        <fullName evidence="1">20S proteasome alpha subunit</fullName>
    </alternativeName>
    <alternativeName>
        <fullName evidence="1">Proteasome core protein PsmA</fullName>
    </alternativeName>
</protein>
<comment type="function">
    <text evidence="1">Component of the proteasome core, a large protease complex with broad specificity involved in protein degradation.</text>
</comment>
<comment type="activity regulation">
    <text evidence="1">The formation of the proteasomal ATPase PAN-20S proteasome complex, via the docking of the C-termini of PAN into the intersubunit pockets in the alpha-rings, triggers opening of the gate for substrate entry. Interconversion between the open-gate and close-gate conformations leads to a dynamic regulation of the 20S proteasome proteolysis activity.</text>
</comment>
<comment type="subunit">
    <text evidence="1">The 20S proteasome core is composed of 14 alpha and 14 beta subunits that assemble into four stacked heptameric rings, resulting in a barrel-shaped structure. The two inner rings, each composed of seven catalytic beta subunits, are sandwiched by two outer rings, each composed of seven alpha subunits. The catalytic chamber with the active sites is on the inside of the barrel. Has a gated structure, the ends of the cylinder being occluded by the N-termini of the alpha-subunits. Is capped at one or both ends by the proteasome regulatory ATPase, PAN.</text>
</comment>
<comment type="subcellular location">
    <subcellularLocation>
        <location evidence="1">Cytoplasm</location>
    </subcellularLocation>
</comment>
<comment type="similarity">
    <text evidence="1">Belongs to the peptidase T1A family.</text>
</comment>
<feature type="chain" id="PRO_1000021793" description="Proteasome subunit alpha">
    <location>
        <begin position="1"/>
        <end position="255"/>
    </location>
</feature>
<keyword id="KW-0963">Cytoplasm</keyword>
<keyword id="KW-0647">Proteasome</keyword>
<keyword id="KW-1185">Reference proteome</keyword>
<dbReference type="EMBL" id="CR936257">
    <property type="protein sequence ID" value="CAI49960.1"/>
    <property type="molecule type" value="Genomic_DNA"/>
</dbReference>
<dbReference type="RefSeq" id="WP_011323577.1">
    <property type="nucleotide sequence ID" value="NC_007426.1"/>
</dbReference>
<dbReference type="SMR" id="Q3IPJ1"/>
<dbReference type="STRING" id="348780.NP_3738A"/>
<dbReference type="EnsemblBacteria" id="CAI49960">
    <property type="protein sequence ID" value="CAI49960"/>
    <property type="gene ID" value="NP_3738A"/>
</dbReference>
<dbReference type="GeneID" id="3703061"/>
<dbReference type="KEGG" id="nph:NP_3738A"/>
<dbReference type="eggNOG" id="arCOG00971">
    <property type="taxonomic scope" value="Archaea"/>
</dbReference>
<dbReference type="HOGENOM" id="CLU_035750_4_1_2"/>
<dbReference type="OrthoDB" id="9421at2157"/>
<dbReference type="Proteomes" id="UP000002698">
    <property type="component" value="Chromosome"/>
</dbReference>
<dbReference type="GO" id="GO:0005737">
    <property type="term" value="C:cytoplasm"/>
    <property type="evidence" value="ECO:0007669"/>
    <property type="project" value="UniProtKB-SubCell"/>
</dbReference>
<dbReference type="GO" id="GO:0019773">
    <property type="term" value="C:proteasome core complex, alpha-subunit complex"/>
    <property type="evidence" value="ECO:0000250"/>
    <property type="project" value="UniProtKB"/>
</dbReference>
<dbReference type="GO" id="GO:0004298">
    <property type="term" value="F:threonine-type endopeptidase activity"/>
    <property type="evidence" value="ECO:0007669"/>
    <property type="project" value="InterPro"/>
</dbReference>
<dbReference type="GO" id="GO:0010498">
    <property type="term" value="P:proteasomal protein catabolic process"/>
    <property type="evidence" value="ECO:0007669"/>
    <property type="project" value="UniProtKB-UniRule"/>
</dbReference>
<dbReference type="GO" id="GO:0006511">
    <property type="term" value="P:ubiquitin-dependent protein catabolic process"/>
    <property type="evidence" value="ECO:0007669"/>
    <property type="project" value="InterPro"/>
</dbReference>
<dbReference type="CDD" id="cd03756">
    <property type="entry name" value="proteasome_alpha_archeal"/>
    <property type="match status" value="1"/>
</dbReference>
<dbReference type="FunFam" id="3.60.20.10:FF:000004">
    <property type="entry name" value="Proteasome subunit alpha type-4"/>
    <property type="match status" value="1"/>
</dbReference>
<dbReference type="Gene3D" id="3.60.20.10">
    <property type="entry name" value="Glutamine Phosphoribosylpyrophosphate, subunit 1, domain 1"/>
    <property type="match status" value="1"/>
</dbReference>
<dbReference type="HAMAP" id="MF_00289_A">
    <property type="entry name" value="Proteasome_A_A"/>
    <property type="match status" value="1"/>
</dbReference>
<dbReference type="InterPro" id="IPR029055">
    <property type="entry name" value="Ntn_hydrolases_N"/>
</dbReference>
<dbReference type="InterPro" id="IPR050115">
    <property type="entry name" value="Proteasome_alpha"/>
</dbReference>
<dbReference type="InterPro" id="IPR023332">
    <property type="entry name" value="Proteasome_alpha-type"/>
</dbReference>
<dbReference type="InterPro" id="IPR019982">
    <property type="entry name" value="Proteasome_asu_arc"/>
</dbReference>
<dbReference type="InterPro" id="IPR000426">
    <property type="entry name" value="Proteasome_asu_N"/>
</dbReference>
<dbReference type="InterPro" id="IPR001353">
    <property type="entry name" value="Proteasome_sua/b"/>
</dbReference>
<dbReference type="NCBIfam" id="TIGR03633">
    <property type="entry name" value="arc_protsome_A"/>
    <property type="match status" value="1"/>
</dbReference>
<dbReference type="NCBIfam" id="NF003075">
    <property type="entry name" value="PRK03996.1"/>
    <property type="match status" value="1"/>
</dbReference>
<dbReference type="PANTHER" id="PTHR11599">
    <property type="entry name" value="PROTEASOME SUBUNIT ALPHA/BETA"/>
    <property type="match status" value="1"/>
</dbReference>
<dbReference type="Pfam" id="PF00227">
    <property type="entry name" value="Proteasome"/>
    <property type="match status" value="1"/>
</dbReference>
<dbReference type="Pfam" id="PF10584">
    <property type="entry name" value="Proteasome_A_N"/>
    <property type="match status" value="1"/>
</dbReference>
<dbReference type="SMART" id="SM00948">
    <property type="entry name" value="Proteasome_A_N"/>
    <property type="match status" value="1"/>
</dbReference>
<dbReference type="SUPFAM" id="SSF56235">
    <property type="entry name" value="N-terminal nucleophile aminohydrolases (Ntn hydrolases)"/>
    <property type="match status" value="1"/>
</dbReference>
<dbReference type="PROSITE" id="PS00388">
    <property type="entry name" value="PROTEASOME_ALPHA_1"/>
    <property type="match status" value="1"/>
</dbReference>
<dbReference type="PROSITE" id="PS51475">
    <property type="entry name" value="PROTEASOME_ALPHA_2"/>
    <property type="match status" value="1"/>
</dbReference>
<name>PSA_NATPD</name>